<sequence>MSDYEEDEAFGMDGAVMEEEVDELEMIDENGQSQQGVSHPGEPSTTVITEDVASSKTAQSGKAVAKEDRTTTPYMTKYERARILGTRALQISMNAPVLVDLEGETDPLQIAMKELAQKKIPLLVRRYLPDGSYEDWSVAELI</sequence>
<protein>
    <recommendedName>
        <fullName>DNA-directed RNA polymerases I, II, and III subunit RPABC2</fullName>
        <shortName>RNA polymerases I, II, and III subunit ABC2</shortName>
    </recommendedName>
    <alternativeName>
        <fullName>DNA-directed RNA polymerases I, II, and III 15 kDa polypeptide</fullName>
    </alternativeName>
    <alternativeName>
        <fullName>RPC16</fullName>
    </alternativeName>
</protein>
<comment type="function">
    <text evidence="1">DNA-dependent RNA polymerases catalyze the transcription of DNA into RNA using the four ribonucleoside triphosphates as substrates. Common component of RNA polymerases I, II and III which synthesize ribosomal RNA precursors, mRNA precursors and many functional non-coding RNAs, and small RNAs, such as 5S rRNA and tRNAs, respectively. Pol II is the central component of the basal RNA polymerase II transcription machinery. Pols are composed of mobile elements that move relative to each other. In Pol II, RPB6 is part of the clamp element and together with parts of RPB1 and RPB2 forms a pocket to which the RPB4-RPB7 subcomplex binds (By similarity).</text>
</comment>
<comment type="subunit">
    <text evidence="1">Component of the RNA polymerase I (Pol I), RNA polymerase II (Pol II) and RNA polymerase III (Pol III) complexes consisting of at least 14, 12 and 17 subunits, respectively.</text>
</comment>
<comment type="subcellular location">
    <subcellularLocation>
        <location evidence="1">Nucleus</location>
    </subcellularLocation>
</comment>
<comment type="PTM">
    <text>Phosphorylated.</text>
</comment>
<comment type="similarity">
    <text evidence="3">Belongs to the archaeal Rpo6/eukaryotic RPB6 RNA polymerase subunit family.</text>
</comment>
<accession>P36595</accession>
<dbReference type="EMBL" id="L00597">
    <property type="protein sequence ID" value="AAA52084.1"/>
    <property type="molecule type" value="Genomic_DNA"/>
</dbReference>
<dbReference type="EMBL" id="L25592">
    <property type="protein sequence ID" value="AAB04116.1"/>
    <property type="molecule type" value="Genomic_DNA"/>
</dbReference>
<dbReference type="EMBL" id="CU329672">
    <property type="protein sequence ID" value="CAA18992.1"/>
    <property type="molecule type" value="Genomic_DNA"/>
</dbReference>
<dbReference type="PIR" id="T40837">
    <property type="entry name" value="T40837"/>
</dbReference>
<dbReference type="RefSeq" id="NP_587956.1">
    <property type="nucleotide sequence ID" value="NM_001022947.2"/>
</dbReference>
<dbReference type="PDB" id="3H0G">
    <property type="method" value="X-ray"/>
    <property type="resolution" value="3.65 A"/>
    <property type="chains" value="F/R=1-142"/>
</dbReference>
<dbReference type="PDB" id="5U0S">
    <property type="method" value="EM"/>
    <property type="resolution" value="7.80 A"/>
    <property type="chains" value="f=1-142"/>
</dbReference>
<dbReference type="PDB" id="7AOC">
    <property type="method" value="EM"/>
    <property type="resolution" value="3.84 A"/>
    <property type="chains" value="F=1-142"/>
</dbReference>
<dbReference type="PDB" id="7AOD">
    <property type="method" value="EM"/>
    <property type="resolution" value="4.50 A"/>
    <property type="chains" value="F/R=1-142"/>
</dbReference>
<dbReference type="PDB" id="7AOE">
    <property type="method" value="EM"/>
    <property type="resolution" value="3.90 A"/>
    <property type="chains" value="F=1-142"/>
</dbReference>
<dbReference type="PDB" id="8QSZ">
    <property type="method" value="EM"/>
    <property type="resolution" value="2.67 A"/>
    <property type="chains" value="F=1-142"/>
</dbReference>
<dbReference type="PDBsum" id="3H0G"/>
<dbReference type="PDBsum" id="5U0S"/>
<dbReference type="PDBsum" id="7AOC"/>
<dbReference type="PDBsum" id="7AOD"/>
<dbReference type="PDBsum" id="7AOE"/>
<dbReference type="PDBsum" id="8QSZ"/>
<dbReference type="EMDB" id="EMD-11840"/>
<dbReference type="EMDB" id="EMD-11841"/>
<dbReference type="EMDB" id="EMD-11842"/>
<dbReference type="EMDB" id="EMD-18643"/>
<dbReference type="EMDB" id="EMD-8480"/>
<dbReference type="SMR" id="P36595"/>
<dbReference type="BioGRID" id="275655">
    <property type="interactions" value="14"/>
</dbReference>
<dbReference type="ComplexPortal" id="CPX-2661">
    <property type="entry name" value="DNA-directed RNA polymerase II complex"/>
</dbReference>
<dbReference type="ComplexPortal" id="CPX-8905">
    <property type="entry name" value="DNA-directed RNA polymerase III complex"/>
</dbReference>
<dbReference type="ComplexPortal" id="CPX-8907">
    <property type="entry name" value="DNA-directed RNA polymerase I complex"/>
</dbReference>
<dbReference type="FunCoup" id="P36595">
    <property type="interactions" value="416"/>
</dbReference>
<dbReference type="IntAct" id="P36595">
    <property type="interactions" value="1"/>
</dbReference>
<dbReference type="STRING" id="284812.P36595"/>
<dbReference type="iPTMnet" id="P36595"/>
<dbReference type="PaxDb" id="4896-SPCC1020.04c.1"/>
<dbReference type="EnsemblFungi" id="SPCC1020.04c.1">
    <property type="protein sequence ID" value="SPCC1020.04c.1:pep"/>
    <property type="gene ID" value="SPCC1020.04c"/>
</dbReference>
<dbReference type="GeneID" id="2539083"/>
<dbReference type="KEGG" id="spo:2539083"/>
<dbReference type="PomBase" id="SPCC1020.04c">
    <property type="gene designation" value="rpb6"/>
</dbReference>
<dbReference type="VEuPathDB" id="FungiDB:SPCC1020.04c"/>
<dbReference type="eggNOG" id="KOG3405">
    <property type="taxonomic scope" value="Eukaryota"/>
</dbReference>
<dbReference type="HOGENOM" id="CLU_112527_0_1_1"/>
<dbReference type="InParanoid" id="P36595"/>
<dbReference type="OMA" id="MLVRRTW"/>
<dbReference type="PhylomeDB" id="P36595"/>
<dbReference type="Reactome" id="R-SPO-113418">
    <property type="pathway name" value="Formation of the Early Elongation Complex"/>
</dbReference>
<dbReference type="Reactome" id="R-SPO-5578749">
    <property type="pathway name" value="Transcriptional regulation by small RNAs"/>
</dbReference>
<dbReference type="Reactome" id="R-SPO-674695">
    <property type="pathway name" value="RNA Polymerase II Pre-transcription Events"/>
</dbReference>
<dbReference type="Reactome" id="R-SPO-6781823">
    <property type="pathway name" value="Formation of TC-NER Pre-Incision Complex"/>
</dbReference>
<dbReference type="Reactome" id="R-SPO-6782135">
    <property type="pathway name" value="Dual incision in TC-NER"/>
</dbReference>
<dbReference type="Reactome" id="R-SPO-6782210">
    <property type="pathway name" value="Gap-filling DNA repair synthesis and ligation in TC-NER"/>
</dbReference>
<dbReference type="Reactome" id="R-SPO-6796648">
    <property type="pathway name" value="TP53 Regulates Transcription of DNA Repair Genes"/>
</dbReference>
<dbReference type="Reactome" id="R-SPO-6807505">
    <property type="pathway name" value="RNA polymerase II transcribes snRNA genes"/>
</dbReference>
<dbReference type="Reactome" id="R-SPO-72086">
    <property type="pathway name" value="mRNA Capping"/>
</dbReference>
<dbReference type="Reactome" id="R-SPO-72163">
    <property type="pathway name" value="mRNA Splicing - Major Pathway"/>
</dbReference>
<dbReference type="Reactome" id="R-SPO-72203">
    <property type="pathway name" value="Processing of Capped Intron-Containing Pre-mRNA"/>
</dbReference>
<dbReference type="Reactome" id="R-SPO-73762">
    <property type="pathway name" value="RNA Polymerase I Transcription Initiation"/>
</dbReference>
<dbReference type="Reactome" id="R-SPO-73772">
    <property type="pathway name" value="RNA Polymerase I Promoter Escape"/>
</dbReference>
<dbReference type="Reactome" id="R-SPO-73776">
    <property type="pathway name" value="RNA Polymerase II Promoter Escape"/>
</dbReference>
<dbReference type="Reactome" id="R-SPO-73779">
    <property type="pathway name" value="RNA Polymerase II Transcription Pre-Initiation And Promoter Opening"/>
</dbReference>
<dbReference type="Reactome" id="R-SPO-75953">
    <property type="pathway name" value="RNA Polymerase II Transcription Initiation"/>
</dbReference>
<dbReference type="Reactome" id="R-SPO-76042">
    <property type="pathway name" value="RNA Polymerase II Transcription Initiation And Promoter Clearance"/>
</dbReference>
<dbReference type="Reactome" id="R-SPO-76061">
    <property type="pathway name" value="RNA Polymerase III Transcription Initiation From Type 1 Promoter"/>
</dbReference>
<dbReference type="Reactome" id="R-SPO-76066">
    <property type="pathway name" value="RNA Polymerase III Transcription Initiation From Type 2 Promoter"/>
</dbReference>
<dbReference type="Reactome" id="R-SPO-77075">
    <property type="pathway name" value="RNA Pol II CTD phosphorylation and interaction with CE"/>
</dbReference>
<dbReference type="Reactome" id="R-SPO-9018519">
    <property type="pathway name" value="Estrogen-dependent gene expression"/>
</dbReference>
<dbReference type="EvolutionaryTrace" id="P36595"/>
<dbReference type="PRO" id="PR:P36595"/>
<dbReference type="Proteomes" id="UP000002485">
    <property type="component" value="Chromosome III"/>
</dbReference>
<dbReference type="GO" id="GO:0005829">
    <property type="term" value="C:cytosol"/>
    <property type="evidence" value="ECO:0007005"/>
    <property type="project" value="PomBase"/>
</dbReference>
<dbReference type="GO" id="GO:0005634">
    <property type="term" value="C:nucleus"/>
    <property type="evidence" value="ECO:0007005"/>
    <property type="project" value="PomBase"/>
</dbReference>
<dbReference type="GO" id="GO:0005736">
    <property type="term" value="C:RNA polymerase I complex"/>
    <property type="evidence" value="ECO:0000314"/>
    <property type="project" value="PomBase"/>
</dbReference>
<dbReference type="GO" id="GO:0005665">
    <property type="term" value="C:RNA polymerase II, core complex"/>
    <property type="evidence" value="ECO:0000314"/>
    <property type="project" value="PomBase"/>
</dbReference>
<dbReference type="GO" id="GO:0016591">
    <property type="term" value="C:RNA polymerase II, holoenzyme"/>
    <property type="evidence" value="ECO:0000269"/>
    <property type="project" value="PomBase"/>
</dbReference>
<dbReference type="GO" id="GO:0005666">
    <property type="term" value="C:RNA polymerase III complex"/>
    <property type="evidence" value="ECO:0000316"/>
    <property type="project" value="PomBase"/>
</dbReference>
<dbReference type="GO" id="GO:0003677">
    <property type="term" value="F:DNA binding"/>
    <property type="evidence" value="ECO:0007669"/>
    <property type="project" value="InterPro"/>
</dbReference>
<dbReference type="GO" id="GO:0003899">
    <property type="term" value="F:DNA-directed RNA polymerase activity"/>
    <property type="evidence" value="ECO:0007669"/>
    <property type="project" value="InterPro"/>
</dbReference>
<dbReference type="GO" id="GO:0006354">
    <property type="term" value="P:DNA-templated transcription elongation"/>
    <property type="evidence" value="ECO:0000269"/>
    <property type="project" value="PomBase"/>
</dbReference>
<dbReference type="GO" id="GO:0006360">
    <property type="term" value="P:transcription by RNA polymerase I"/>
    <property type="evidence" value="ECO:0000318"/>
    <property type="project" value="GO_Central"/>
</dbReference>
<dbReference type="GO" id="GO:0006366">
    <property type="term" value="P:transcription by RNA polymerase II"/>
    <property type="evidence" value="ECO:0000318"/>
    <property type="project" value="GO_Central"/>
</dbReference>
<dbReference type="GO" id="GO:0006362">
    <property type="term" value="P:transcription elongation by RNA polymerase I"/>
    <property type="evidence" value="ECO:0000269"/>
    <property type="project" value="PomBase"/>
</dbReference>
<dbReference type="GO" id="GO:0042797">
    <property type="term" value="P:tRNA transcription by RNA polymerase III"/>
    <property type="evidence" value="ECO:0000318"/>
    <property type="project" value="GO_Central"/>
</dbReference>
<dbReference type="FunFam" id="3.90.940.10:FF:000004">
    <property type="entry name" value="DNA-directed RNA polymerases I, II, and III subunit RPABC2"/>
    <property type="match status" value="1"/>
</dbReference>
<dbReference type="Gene3D" id="3.90.940.10">
    <property type="match status" value="1"/>
</dbReference>
<dbReference type="HAMAP" id="MF_00192">
    <property type="entry name" value="RNApol_arch_Rpo6"/>
    <property type="match status" value="1"/>
</dbReference>
<dbReference type="InterPro" id="IPR020708">
    <property type="entry name" value="DNA-dir_RNA_polK_14-18kDa_CS"/>
</dbReference>
<dbReference type="InterPro" id="IPR006110">
    <property type="entry name" value="Pol_omega/Rpo6/RPB6"/>
</dbReference>
<dbReference type="InterPro" id="IPR028363">
    <property type="entry name" value="RPB6"/>
</dbReference>
<dbReference type="InterPro" id="IPR036161">
    <property type="entry name" value="RPB6/omega-like_sf"/>
</dbReference>
<dbReference type="InterPro" id="IPR006111">
    <property type="entry name" value="Rpo6/Rpb6"/>
</dbReference>
<dbReference type="NCBIfam" id="NF002207">
    <property type="entry name" value="PRK01099.1-2"/>
    <property type="match status" value="1"/>
</dbReference>
<dbReference type="NCBIfam" id="NF002208">
    <property type="entry name" value="PRK01099.1-3"/>
    <property type="match status" value="1"/>
</dbReference>
<dbReference type="PANTHER" id="PTHR47227">
    <property type="entry name" value="DNA-DIRECTED RNA POLYMERASE SUBUNIT K"/>
    <property type="match status" value="1"/>
</dbReference>
<dbReference type="PANTHER" id="PTHR47227:SF5">
    <property type="entry name" value="DNA-DIRECTED RNA POLYMERASES I, II, AND III SUBUNIT RPABC2"/>
    <property type="match status" value="1"/>
</dbReference>
<dbReference type="Pfam" id="PF01192">
    <property type="entry name" value="RNA_pol_Rpb6"/>
    <property type="match status" value="1"/>
</dbReference>
<dbReference type="PIRSF" id="PIRSF500154">
    <property type="entry name" value="RPB6"/>
    <property type="match status" value="1"/>
</dbReference>
<dbReference type="PIRSF" id="PIRSF000778">
    <property type="entry name" value="RpoK/RPB6"/>
    <property type="match status" value="1"/>
</dbReference>
<dbReference type="SMART" id="SM01409">
    <property type="entry name" value="RNA_pol_Rpb6"/>
    <property type="match status" value="1"/>
</dbReference>
<dbReference type="SUPFAM" id="SSF63562">
    <property type="entry name" value="RPB6/omega subunit-like"/>
    <property type="match status" value="1"/>
</dbReference>
<dbReference type="PROSITE" id="PS01111">
    <property type="entry name" value="RNA_POL_K_14KD"/>
    <property type="match status" value="1"/>
</dbReference>
<evidence type="ECO:0000250" key="1"/>
<evidence type="ECO:0000256" key="2">
    <source>
        <dbReference type="SAM" id="MobiDB-lite"/>
    </source>
</evidence>
<evidence type="ECO:0000305" key="3"/>
<evidence type="ECO:0007829" key="4">
    <source>
        <dbReference type="PDB" id="8QSZ"/>
    </source>
</evidence>
<reference key="1">
    <citation type="journal article" date="1994" name="Gene">
        <title>The fission yeast Schizosaccharomyces pombe rpb6 gene encodes the common phosphorylated subunit of RNA polymerase and complements a mutation in the corresponding gene of Saccharomyces cerevisiae.</title>
        <authorList>
            <person name="Shpakovski G.V."/>
        </authorList>
    </citation>
    <scope>NUCLEOTIDE SEQUENCE [GENOMIC DNA]</scope>
    <source>
        <strain>972 / ATCC 24843</strain>
    </source>
</reference>
<reference key="2">
    <citation type="submission" date="1993-11" db="EMBL/GenBank/DDBJ databases">
        <title>Sequence of the rpo15 gene from S. pombe - a subunit common to all three RNA polymerases.</title>
        <authorList>
            <person name="Williams M.R."/>
            <person name="Konoha G."/>
            <person name="Yanagida M."/>
            <person name="Young R.F."/>
        </authorList>
    </citation>
    <scope>NUCLEOTIDE SEQUENCE [GENOMIC DNA]</scope>
    <source>
        <strain>972 / ATCC 24843</strain>
    </source>
</reference>
<reference key="3">
    <citation type="journal article" date="2002" name="Nature">
        <title>The genome sequence of Schizosaccharomyces pombe.</title>
        <authorList>
            <person name="Wood V."/>
            <person name="Gwilliam R."/>
            <person name="Rajandream M.A."/>
            <person name="Lyne M.H."/>
            <person name="Lyne R."/>
            <person name="Stewart A."/>
            <person name="Sgouros J.G."/>
            <person name="Peat N."/>
            <person name="Hayles J."/>
            <person name="Baker S.G."/>
            <person name="Basham D."/>
            <person name="Bowman S."/>
            <person name="Brooks K."/>
            <person name="Brown D."/>
            <person name="Brown S."/>
            <person name="Chillingworth T."/>
            <person name="Churcher C.M."/>
            <person name="Collins M."/>
            <person name="Connor R."/>
            <person name="Cronin A."/>
            <person name="Davis P."/>
            <person name="Feltwell T."/>
            <person name="Fraser A."/>
            <person name="Gentles S."/>
            <person name="Goble A."/>
            <person name="Hamlin N."/>
            <person name="Harris D.E."/>
            <person name="Hidalgo J."/>
            <person name="Hodgson G."/>
            <person name="Holroyd S."/>
            <person name="Hornsby T."/>
            <person name="Howarth S."/>
            <person name="Huckle E.J."/>
            <person name="Hunt S."/>
            <person name="Jagels K."/>
            <person name="James K.D."/>
            <person name="Jones L."/>
            <person name="Jones M."/>
            <person name="Leather S."/>
            <person name="McDonald S."/>
            <person name="McLean J."/>
            <person name="Mooney P."/>
            <person name="Moule S."/>
            <person name="Mungall K.L."/>
            <person name="Murphy L.D."/>
            <person name="Niblett D."/>
            <person name="Odell C."/>
            <person name="Oliver K."/>
            <person name="O'Neil S."/>
            <person name="Pearson D."/>
            <person name="Quail M.A."/>
            <person name="Rabbinowitsch E."/>
            <person name="Rutherford K.M."/>
            <person name="Rutter S."/>
            <person name="Saunders D."/>
            <person name="Seeger K."/>
            <person name="Sharp S."/>
            <person name="Skelton J."/>
            <person name="Simmonds M.N."/>
            <person name="Squares R."/>
            <person name="Squares S."/>
            <person name="Stevens K."/>
            <person name="Taylor K."/>
            <person name="Taylor R.G."/>
            <person name="Tivey A."/>
            <person name="Walsh S.V."/>
            <person name="Warren T."/>
            <person name="Whitehead S."/>
            <person name="Woodward J.R."/>
            <person name="Volckaert G."/>
            <person name="Aert R."/>
            <person name="Robben J."/>
            <person name="Grymonprez B."/>
            <person name="Weltjens I."/>
            <person name="Vanstreels E."/>
            <person name="Rieger M."/>
            <person name="Schaefer M."/>
            <person name="Mueller-Auer S."/>
            <person name="Gabel C."/>
            <person name="Fuchs M."/>
            <person name="Duesterhoeft A."/>
            <person name="Fritzc C."/>
            <person name="Holzer E."/>
            <person name="Moestl D."/>
            <person name="Hilbert H."/>
            <person name="Borzym K."/>
            <person name="Langer I."/>
            <person name="Beck A."/>
            <person name="Lehrach H."/>
            <person name="Reinhardt R."/>
            <person name="Pohl T.M."/>
            <person name="Eger P."/>
            <person name="Zimmermann W."/>
            <person name="Wedler H."/>
            <person name="Wambutt R."/>
            <person name="Purnelle B."/>
            <person name="Goffeau A."/>
            <person name="Cadieu E."/>
            <person name="Dreano S."/>
            <person name="Gloux S."/>
            <person name="Lelaure V."/>
            <person name="Mottier S."/>
            <person name="Galibert F."/>
            <person name="Aves S.J."/>
            <person name="Xiang Z."/>
            <person name="Hunt C."/>
            <person name="Moore K."/>
            <person name="Hurst S.M."/>
            <person name="Lucas M."/>
            <person name="Rochet M."/>
            <person name="Gaillardin C."/>
            <person name="Tallada V.A."/>
            <person name="Garzon A."/>
            <person name="Thode G."/>
            <person name="Daga R.R."/>
            <person name="Cruzado L."/>
            <person name="Jimenez J."/>
            <person name="Sanchez M."/>
            <person name="del Rey F."/>
            <person name="Benito J."/>
            <person name="Dominguez A."/>
            <person name="Revuelta J.L."/>
            <person name="Moreno S."/>
            <person name="Armstrong J."/>
            <person name="Forsburg S.L."/>
            <person name="Cerutti L."/>
            <person name="Lowe T."/>
            <person name="McCombie W.R."/>
            <person name="Paulsen I."/>
            <person name="Potashkin J."/>
            <person name="Shpakovski G.V."/>
            <person name="Ussery D."/>
            <person name="Barrell B.G."/>
            <person name="Nurse P."/>
        </authorList>
    </citation>
    <scope>NUCLEOTIDE SEQUENCE [LARGE SCALE GENOMIC DNA]</scope>
    <source>
        <strain>972 / ATCC 24843</strain>
    </source>
</reference>
<gene>
    <name type="primary">rpb6</name>
    <name type="synonym">rpo15</name>
    <name type="ORF">SPCC1020.04c</name>
</gene>
<keyword id="KW-0002">3D-structure</keyword>
<keyword id="KW-0240">DNA-directed RNA polymerase</keyword>
<keyword id="KW-0539">Nucleus</keyword>
<keyword id="KW-0597">Phosphoprotein</keyword>
<keyword id="KW-1185">Reference proteome</keyword>
<keyword id="KW-0804">Transcription</keyword>
<proteinExistence type="evidence at protein level"/>
<organism>
    <name type="scientific">Schizosaccharomyces pombe (strain 972 / ATCC 24843)</name>
    <name type="common">Fission yeast</name>
    <dbReference type="NCBI Taxonomy" id="284812"/>
    <lineage>
        <taxon>Eukaryota</taxon>
        <taxon>Fungi</taxon>
        <taxon>Dikarya</taxon>
        <taxon>Ascomycota</taxon>
        <taxon>Taphrinomycotina</taxon>
        <taxon>Schizosaccharomycetes</taxon>
        <taxon>Schizosaccharomycetales</taxon>
        <taxon>Schizosaccharomycetaceae</taxon>
        <taxon>Schizosaccharomyces</taxon>
    </lineage>
</organism>
<name>RPAB2_SCHPO</name>
<feature type="chain" id="PRO_0000133796" description="DNA-directed RNA polymerases I, II, and III subunit RPABC2">
    <location>
        <begin position="1"/>
        <end position="142"/>
    </location>
</feature>
<feature type="region of interest" description="Disordered" evidence="2">
    <location>
        <begin position="1"/>
        <end position="21"/>
    </location>
</feature>
<feature type="region of interest" description="Disordered" evidence="2">
    <location>
        <begin position="26"/>
        <end position="45"/>
    </location>
</feature>
<feature type="region of interest" description="Disordered" evidence="2">
    <location>
        <begin position="50"/>
        <end position="71"/>
    </location>
</feature>
<feature type="compositionally biased region" description="Polar residues" evidence="2">
    <location>
        <begin position="30"/>
        <end position="45"/>
    </location>
</feature>
<feature type="compositionally biased region" description="Polar residues" evidence="2">
    <location>
        <begin position="50"/>
        <end position="60"/>
    </location>
</feature>
<feature type="turn" evidence="4">
    <location>
        <begin position="66"/>
        <end position="68"/>
    </location>
</feature>
<feature type="helix" evidence="4">
    <location>
        <begin position="77"/>
        <end position="92"/>
    </location>
</feature>
<feature type="helix" evidence="4">
    <location>
        <begin position="107"/>
        <end position="116"/>
    </location>
</feature>
<feature type="strand" evidence="4">
    <location>
        <begin position="122"/>
        <end position="127"/>
    </location>
</feature>
<feature type="strand" evidence="4">
    <location>
        <begin position="133"/>
        <end position="137"/>
    </location>
</feature>
<feature type="turn" evidence="4">
    <location>
        <begin position="138"/>
        <end position="140"/>
    </location>
</feature>